<evidence type="ECO:0000250" key="1">
    <source>
        <dbReference type="UniProtKB" id="Q92583"/>
    </source>
</evidence>
<evidence type="ECO:0000250" key="2">
    <source>
        <dbReference type="UniProtKB" id="Q9WUZ6"/>
    </source>
</evidence>
<evidence type="ECO:0000305" key="3"/>
<keyword id="KW-0145">Chemotaxis</keyword>
<keyword id="KW-0202">Cytokine</keyword>
<keyword id="KW-1015">Disulfide bond</keyword>
<keyword id="KW-0395">Inflammatory response</keyword>
<keyword id="KW-1185">Reference proteome</keyword>
<keyword id="KW-0964">Secreted</keyword>
<keyword id="KW-0732">Signal</keyword>
<proteinExistence type="inferred from homology"/>
<accession>Q8HYP9</accession>
<protein>
    <recommendedName>
        <fullName>C-C motif chemokine 17</fullName>
    </recommendedName>
    <alternativeName>
        <fullName>CC chemokine TARC</fullName>
    </alternativeName>
    <alternativeName>
        <fullName>Small-inducible cytokine A17</fullName>
    </alternativeName>
    <alternativeName>
        <fullName>Thymus and activation-regulated chemokine</fullName>
    </alternativeName>
</protein>
<gene>
    <name type="primary">CCL17</name>
    <name type="synonym">TARC</name>
</gene>
<organism>
    <name type="scientific">Macaca mulatta</name>
    <name type="common">Rhesus macaque</name>
    <dbReference type="NCBI Taxonomy" id="9544"/>
    <lineage>
        <taxon>Eukaryota</taxon>
        <taxon>Metazoa</taxon>
        <taxon>Chordata</taxon>
        <taxon>Craniata</taxon>
        <taxon>Vertebrata</taxon>
        <taxon>Euteleostomi</taxon>
        <taxon>Mammalia</taxon>
        <taxon>Eutheria</taxon>
        <taxon>Euarchontoglires</taxon>
        <taxon>Primates</taxon>
        <taxon>Haplorrhini</taxon>
        <taxon>Catarrhini</taxon>
        <taxon>Cercopithecidae</taxon>
        <taxon>Cercopithecinae</taxon>
        <taxon>Macaca</taxon>
    </lineage>
</organism>
<sequence length="94" mass="10549">MAPLKMLALVILLLGASLQHIHAARGTNVGRECCLKYFKGAIPLRKLKTWYQTSEDCSRDAIVFVTVQNKAICSDPNDKKVKKALKYLQSLERS</sequence>
<comment type="function">
    <text evidence="1 2">Chemokine, which displays chemotactic activity for T lymphocytes, preferentially Th2 cells, but not monocytes or granulocytes. Therefore plays an important role in a wide range of inflammatory and immunological processes. Acts by binding to CCR4 at T-cell surface. Mediates GM-CSF/CSF2-driven pain and inflammation (By similarity). In the brain, required to maintain the typical, highly branched morphology of hippocampal microglia under homeostatic conditions. May be important for the appropriate adaptation of microglial morphology and synaptic plasticity to acute lipopolysaccharide (LPS)-induced neuroinflammation. Plays a role in wound healing, mainly by inducing fibroblast migration into the wound (By similarity).</text>
</comment>
<comment type="subcellular location">
    <subcellularLocation>
        <location evidence="1">Secreted</location>
    </subcellularLocation>
</comment>
<comment type="similarity">
    <text evidence="3">Belongs to the intercrine beta (chemokine CC) family.</text>
</comment>
<reference key="1">
    <citation type="journal article" date="2002" name="Cytokine">
        <title>Molecular cloning and sequencing of 25 different rhesus macaque chemokine cDNAs reveals evolutionary conservation among C, CC, CXC, and CX3C families of chemokines.</title>
        <authorList>
            <person name="Basu S."/>
            <person name="Schaefer T.M."/>
            <person name="Ghosh M."/>
            <person name="Fuller C.L."/>
            <person name="Reinhart T.A."/>
        </authorList>
    </citation>
    <scope>NUCLEOTIDE SEQUENCE [MRNA]</scope>
</reference>
<dbReference type="EMBL" id="AF449271">
    <property type="protein sequence ID" value="AAN76075.1"/>
    <property type="molecule type" value="mRNA"/>
</dbReference>
<dbReference type="RefSeq" id="NP_001028024.1">
    <property type="nucleotide sequence ID" value="NM_001032852.1"/>
</dbReference>
<dbReference type="SMR" id="Q8HYP9"/>
<dbReference type="FunCoup" id="Q8HYP9">
    <property type="interactions" value="755"/>
</dbReference>
<dbReference type="STRING" id="9544.ENSMMUP00000069829"/>
<dbReference type="PaxDb" id="9544-ENSMMUP00000023940"/>
<dbReference type="GeneID" id="574180"/>
<dbReference type="KEGG" id="mcc:574180"/>
<dbReference type="CTD" id="6361"/>
<dbReference type="eggNOG" id="ENOG502SWZ0">
    <property type="taxonomic scope" value="Eukaryota"/>
</dbReference>
<dbReference type="HOGENOM" id="CLU_141716_6_0_1"/>
<dbReference type="InParanoid" id="Q8HYP9"/>
<dbReference type="OrthoDB" id="9447832at2759"/>
<dbReference type="Proteomes" id="UP000006718">
    <property type="component" value="Unassembled WGS sequence"/>
</dbReference>
<dbReference type="GO" id="GO:0005615">
    <property type="term" value="C:extracellular space"/>
    <property type="evidence" value="ECO:0007669"/>
    <property type="project" value="UniProtKB-KW"/>
</dbReference>
<dbReference type="GO" id="GO:0008009">
    <property type="term" value="F:chemokine activity"/>
    <property type="evidence" value="ECO:0007669"/>
    <property type="project" value="InterPro"/>
</dbReference>
<dbReference type="GO" id="GO:0006955">
    <property type="term" value="P:immune response"/>
    <property type="evidence" value="ECO:0007669"/>
    <property type="project" value="InterPro"/>
</dbReference>
<dbReference type="GO" id="GO:0006954">
    <property type="term" value="P:inflammatory response"/>
    <property type="evidence" value="ECO:0007669"/>
    <property type="project" value="UniProtKB-KW"/>
</dbReference>
<dbReference type="CDD" id="cd00272">
    <property type="entry name" value="Chemokine_CC"/>
    <property type="match status" value="1"/>
</dbReference>
<dbReference type="FunFam" id="2.40.50.40:FF:000012">
    <property type="entry name" value="C-C motif chemokine"/>
    <property type="match status" value="1"/>
</dbReference>
<dbReference type="Gene3D" id="2.40.50.40">
    <property type="match status" value="1"/>
</dbReference>
<dbReference type="InterPro" id="IPR039809">
    <property type="entry name" value="Chemokine_b/g/d"/>
</dbReference>
<dbReference type="InterPro" id="IPR000827">
    <property type="entry name" value="Chemokine_CC_CS"/>
</dbReference>
<dbReference type="InterPro" id="IPR001811">
    <property type="entry name" value="Chemokine_IL8-like_dom"/>
</dbReference>
<dbReference type="InterPro" id="IPR036048">
    <property type="entry name" value="Interleukin_8-like_sf"/>
</dbReference>
<dbReference type="PANTHER" id="PTHR12015:SF111">
    <property type="entry name" value="C-C MOTIF CHEMOKINE 17"/>
    <property type="match status" value="1"/>
</dbReference>
<dbReference type="PANTHER" id="PTHR12015">
    <property type="entry name" value="SMALL INDUCIBLE CYTOKINE A"/>
    <property type="match status" value="1"/>
</dbReference>
<dbReference type="Pfam" id="PF00048">
    <property type="entry name" value="IL8"/>
    <property type="match status" value="1"/>
</dbReference>
<dbReference type="SMART" id="SM00199">
    <property type="entry name" value="SCY"/>
    <property type="match status" value="1"/>
</dbReference>
<dbReference type="SUPFAM" id="SSF54117">
    <property type="entry name" value="Interleukin 8-like chemokines"/>
    <property type="match status" value="1"/>
</dbReference>
<dbReference type="PROSITE" id="PS00472">
    <property type="entry name" value="SMALL_CYTOKINES_CC"/>
    <property type="match status" value="1"/>
</dbReference>
<name>CCL17_MACMU</name>
<feature type="signal peptide" evidence="1">
    <location>
        <begin position="1"/>
        <end position="23"/>
    </location>
</feature>
<feature type="chain" id="PRO_0000244871" description="C-C motif chemokine 17">
    <location>
        <begin position="24"/>
        <end position="94"/>
    </location>
</feature>
<feature type="disulfide bond" evidence="1">
    <location>
        <begin position="33"/>
        <end position="57"/>
    </location>
</feature>
<feature type="disulfide bond" evidence="1">
    <location>
        <begin position="34"/>
        <end position="73"/>
    </location>
</feature>